<dbReference type="EMBL" id="CP000410">
    <property type="protein sequence ID" value="ABJ55413.1"/>
    <property type="molecule type" value="Genomic_DNA"/>
</dbReference>
<dbReference type="RefSeq" id="WP_001029883.1">
    <property type="nucleotide sequence ID" value="NZ_JAMLJR010000002.1"/>
</dbReference>
<dbReference type="SMR" id="Q04ML4"/>
<dbReference type="PaxDb" id="373153-SPD_0215"/>
<dbReference type="GeneID" id="93964223"/>
<dbReference type="KEGG" id="spd:SPD_0215"/>
<dbReference type="eggNOG" id="COG0361">
    <property type="taxonomic scope" value="Bacteria"/>
</dbReference>
<dbReference type="HOGENOM" id="CLU_151267_1_0_9"/>
<dbReference type="BioCyc" id="SPNE373153:G1G6V-238-MONOMER"/>
<dbReference type="Proteomes" id="UP000001452">
    <property type="component" value="Chromosome"/>
</dbReference>
<dbReference type="GO" id="GO:0005829">
    <property type="term" value="C:cytosol"/>
    <property type="evidence" value="ECO:0007669"/>
    <property type="project" value="TreeGrafter"/>
</dbReference>
<dbReference type="GO" id="GO:0043022">
    <property type="term" value="F:ribosome binding"/>
    <property type="evidence" value="ECO:0007669"/>
    <property type="project" value="UniProtKB-UniRule"/>
</dbReference>
<dbReference type="GO" id="GO:0019843">
    <property type="term" value="F:rRNA binding"/>
    <property type="evidence" value="ECO:0007669"/>
    <property type="project" value="UniProtKB-UniRule"/>
</dbReference>
<dbReference type="GO" id="GO:0003743">
    <property type="term" value="F:translation initiation factor activity"/>
    <property type="evidence" value="ECO:0007669"/>
    <property type="project" value="UniProtKB-UniRule"/>
</dbReference>
<dbReference type="CDD" id="cd04451">
    <property type="entry name" value="S1_IF1"/>
    <property type="match status" value="1"/>
</dbReference>
<dbReference type="FunFam" id="2.40.50.140:FF:000002">
    <property type="entry name" value="Translation initiation factor IF-1"/>
    <property type="match status" value="1"/>
</dbReference>
<dbReference type="Gene3D" id="2.40.50.140">
    <property type="entry name" value="Nucleic acid-binding proteins"/>
    <property type="match status" value="1"/>
</dbReference>
<dbReference type="HAMAP" id="MF_00075">
    <property type="entry name" value="IF_1"/>
    <property type="match status" value="1"/>
</dbReference>
<dbReference type="InterPro" id="IPR012340">
    <property type="entry name" value="NA-bd_OB-fold"/>
</dbReference>
<dbReference type="InterPro" id="IPR006196">
    <property type="entry name" value="RNA-binding_domain_S1_IF1"/>
</dbReference>
<dbReference type="InterPro" id="IPR003029">
    <property type="entry name" value="S1_domain"/>
</dbReference>
<dbReference type="InterPro" id="IPR004368">
    <property type="entry name" value="TIF_IF1"/>
</dbReference>
<dbReference type="NCBIfam" id="TIGR00008">
    <property type="entry name" value="infA"/>
    <property type="match status" value="1"/>
</dbReference>
<dbReference type="PANTHER" id="PTHR33370">
    <property type="entry name" value="TRANSLATION INITIATION FACTOR IF-1, CHLOROPLASTIC"/>
    <property type="match status" value="1"/>
</dbReference>
<dbReference type="PANTHER" id="PTHR33370:SF1">
    <property type="entry name" value="TRANSLATION INITIATION FACTOR IF-1, CHLOROPLASTIC"/>
    <property type="match status" value="1"/>
</dbReference>
<dbReference type="Pfam" id="PF01176">
    <property type="entry name" value="eIF-1a"/>
    <property type="match status" value="1"/>
</dbReference>
<dbReference type="SMART" id="SM00316">
    <property type="entry name" value="S1"/>
    <property type="match status" value="1"/>
</dbReference>
<dbReference type="SUPFAM" id="SSF50249">
    <property type="entry name" value="Nucleic acid-binding proteins"/>
    <property type="match status" value="1"/>
</dbReference>
<dbReference type="PROSITE" id="PS50832">
    <property type="entry name" value="S1_IF1_TYPE"/>
    <property type="match status" value="1"/>
</dbReference>
<comment type="function">
    <text evidence="1">One of the essential components for the initiation of protein synthesis. Stabilizes the binding of IF-2 and IF-3 on the 30S subunit to which N-formylmethionyl-tRNA(fMet) subsequently binds. Helps modulate mRNA selection, yielding the 30S pre-initiation complex (PIC). Upon addition of the 50S ribosomal subunit IF-1, IF-2 and IF-3 are released leaving the mature 70S translation initiation complex.</text>
</comment>
<comment type="subunit">
    <text evidence="1">Component of the 30S ribosomal translation pre-initiation complex which assembles on the 30S ribosome in the order IF-2 and IF-3, IF-1 and N-formylmethionyl-tRNA(fMet); mRNA recruitment can occur at any time during PIC assembly.</text>
</comment>
<comment type="subcellular location">
    <subcellularLocation>
        <location evidence="1">Cytoplasm</location>
    </subcellularLocation>
</comment>
<comment type="similarity">
    <text evidence="1">Belongs to the IF-1 family.</text>
</comment>
<protein>
    <recommendedName>
        <fullName evidence="1">Translation initiation factor IF-1</fullName>
    </recommendedName>
</protein>
<sequence length="72" mass="8203">MAKDDVIEVEGKVVDTMPNAMFTVELENGHQILATVSGKIRKNYIRILAGDRVTVEMSPYDLTRGRITYRFK</sequence>
<organism>
    <name type="scientific">Streptococcus pneumoniae serotype 2 (strain D39 / NCTC 7466)</name>
    <dbReference type="NCBI Taxonomy" id="373153"/>
    <lineage>
        <taxon>Bacteria</taxon>
        <taxon>Bacillati</taxon>
        <taxon>Bacillota</taxon>
        <taxon>Bacilli</taxon>
        <taxon>Lactobacillales</taxon>
        <taxon>Streptococcaceae</taxon>
        <taxon>Streptococcus</taxon>
    </lineage>
</organism>
<reference key="1">
    <citation type="journal article" date="2007" name="J. Bacteriol.">
        <title>Genome sequence of Avery's virulent serotype 2 strain D39 of Streptococcus pneumoniae and comparison with that of unencapsulated laboratory strain R6.</title>
        <authorList>
            <person name="Lanie J.A."/>
            <person name="Ng W.-L."/>
            <person name="Kazmierczak K.M."/>
            <person name="Andrzejewski T.M."/>
            <person name="Davidsen T.M."/>
            <person name="Wayne K.J."/>
            <person name="Tettelin H."/>
            <person name="Glass J.I."/>
            <person name="Winkler M.E."/>
        </authorList>
    </citation>
    <scope>NUCLEOTIDE SEQUENCE [LARGE SCALE GENOMIC DNA]</scope>
    <source>
        <strain>D39 / NCTC 7466</strain>
    </source>
</reference>
<keyword id="KW-0963">Cytoplasm</keyword>
<keyword id="KW-0396">Initiation factor</keyword>
<keyword id="KW-0648">Protein biosynthesis</keyword>
<keyword id="KW-1185">Reference proteome</keyword>
<keyword id="KW-0694">RNA-binding</keyword>
<keyword id="KW-0699">rRNA-binding</keyword>
<evidence type="ECO:0000255" key="1">
    <source>
        <dbReference type="HAMAP-Rule" id="MF_00075"/>
    </source>
</evidence>
<gene>
    <name evidence="1" type="primary">infA</name>
    <name type="ordered locus">SPD_0215</name>
</gene>
<proteinExistence type="inferred from homology"/>
<feature type="chain" id="PRO_0000338935" description="Translation initiation factor IF-1">
    <location>
        <begin position="1"/>
        <end position="72"/>
    </location>
</feature>
<feature type="domain" description="S1-like" evidence="1">
    <location>
        <begin position="1"/>
        <end position="72"/>
    </location>
</feature>
<name>IF1_STRP2</name>
<accession>Q04ML4</accession>